<proteinExistence type="evidence at protein level"/>
<organism>
    <name type="scientific">Mus musculus</name>
    <name type="common">Mouse</name>
    <dbReference type="NCBI Taxonomy" id="10090"/>
    <lineage>
        <taxon>Eukaryota</taxon>
        <taxon>Metazoa</taxon>
        <taxon>Chordata</taxon>
        <taxon>Craniata</taxon>
        <taxon>Vertebrata</taxon>
        <taxon>Euteleostomi</taxon>
        <taxon>Mammalia</taxon>
        <taxon>Eutheria</taxon>
        <taxon>Euarchontoglires</taxon>
        <taxon>Glires</taxon>
        <taxon>Rodentia</taxon>
        <taxon>Myomorpha</taxon>
        <taxon>Muroidea</taxon>
        <taxon>Muridae</taxon>
        <taxon>Murinae</taxon>
        <taxon>Mus</taxon>
        <taxon>Mus</taxon>
    </lineage>
</organism>
<reference key="1">
    <citation type="journal article" date="2004" name="DNA Res.">
        <title>Prediction of the coding sequences of mouse homologues of KIAA gene: IV. The complete nucleotide sequences of 500 mouse KIAA-homologous cDNAs identified by screening of terminal sequences of cDNA clones randomly sampled from size-fractionated libraries.</title>
        <authorList>
            <person name="Okazaki N."/>
            <person name="Kikuno R."/>
            <person name="Ohara R."/>
            <person name="Inamoto S."/>
            <person name="Koseki H."/>
            <person name="Hiraoka S."/>
            <person name="Saga Y."/>
            <person name="Seino S."/>
            <person name="Nishimura M."/>
            <person name="Kaisho T."/>
            <person name="Hoshino K."/>
            <person name="Kitamura H."/>
            <person name="Nagase T."/>
            <person name="Ohara O."/>
            <person name="Koga H."/>
        </authorList>
    </citation>
    <scope>NUCLEOTIDE SEQUENCE [LARGE SCALE MRNA] (ISOFORM 2)</scope>
    <source>
        <tissue>Embryonic tail</tissue>
    </source>
</reference>
<reference key="2">
    <citation type="journal article" date="2009" name="PLoS Biol.">
        <title>Lineage-specific biology revealed by a finished genome assembly of the mouse.</title>
        <authorList>
            <person name="Church D.M."/>
            <person name="Goodstadt L."/>
            <person name="Hillier L.W."/>
            <person name="Zody M.C."/>
            <person name="Goldstein S."/>
            <person name="She X."/>
            <person name="Bult C.J."/>
            <person name="Agarwala R."/>
            <person name="Cherry J.L."/>
            <person name="DiCuccio M."/>
            <person name="Hlavina W."/>
            <person name="Kapustin Y."/>
            <person name="Meric P."/>
            <person name="Maglott D."/>
            <person name="Birtle Z."/>
            <person name="Marques A.C."/>
            <person name="Graves T."/>
            <person name="Zhou S."/>
            <person name="Teague B."/>
            <person name="Potamousis K."/>
            <person name="Churas C."/>
            <person name="Place M."/>
            <person name="Herschleb J."/>
            <person name="Runnheim R."/>
            <person name="Forrest D."/>
            <person name="Amos-Landgraf J."/>
            <person name="Schwartz D.C."/>
            <person name="Cheng Z."/>
            <person name="Lindblad-Toh K."/>
            <person name="Eichler E.E."/>
            <person name="Ponting C.P."/>
        </authorList>
    </citation>
    <scope>NUCLEOTIDE SEQUENCE [LARGE SCALE GENOMIC DNA]</scope>
    <source>
        <strain>C57BL/6J</strain>
    </source>
</reference>
<reference key="3">
    <citation type="journal article" date="2005" name="Science">
        <title>The transcriptional landscape of the mammalian genome.</title>
        <authorList>
            <person name="Carninci P."/>
            <person name="Kasukawa T."/>
            <person name="Katayama S."/>
            <person name="Gough J."/>
            <person name="Frith M.C."/>
            <person name="Maeda N."/>
            <person name="Oyama R."/>
            <person name="Ravasi T."/>
            <person name="Lenhard B."/>
            <person name="Wells C."/>
            <person name="Kodzius R."/>
            <person name="Shimokawa K."/>
            <person name="Bajic V.B."/>
            <person name="Brenner S.E."/>
            <person name="Batalov S."/>
            <person name="Forrest A.R."/>
            <person name="Zavolan M."/>
            <person name="Davis M.J."/>
            <person name="Wilming L.G."/>
            <person name="Aidinis V."/>
            <person name="Allen J.E."/>
            <person name="Ambesi-Impiombato A."/>
            <person name="Apweiler R."/>
            <person name="Aturaliya R.N."/>
            <person name="Bailey T.L."/>
            <person name="Bansal M."/>
            <person name="Baxter L."/>
            <person name="Beisel K.W."/>
            <person name="Bersano T."/>
            <person name="Bono H."/>
            <person name="Chalk A.M."/>
            <person name="Chiu K.P."/>
            <person name="Choudhary V."/>
            <person name="Christoffels A."/>
            <person name="Clutterbuck D.R."/>
            <person name="Crowe M.L."/>
            <person name="Dalla E."/>
            <person name="Dalrymple B.P."/>
            <person name="de Bono B."/>
            <person name="Della Gatta G."/>
            <person name="di Bernardo D."/>
            <person name="Down T."/>
            <person name="Engstrom P."/>
            <person name="Fagiolini M."/>
            <person name="Faulkner G."/>
            <person name="Fletcher C.F."/>
            <person name="Fukushima T."/>
            <person name="Furuno M."/>
            <person name="Futaki S."/>
            <person name="Gariboldi M."/>
            <person name="Georgii-Hemming P."/>
            <person name="Gingeras T.R."/>
            <person name="Gojobori T."/>
            <person name="Green R.E."/>
            <person name="Gustincich S."/>
            <person name="Harbers M."/>
            <person name="Hayashi Y."/>
            <person name="Hensch T.K."/>
            <person name="Hirokawa N."/>
            <person name="Hill D."/>
            <person name="Huminiecki L."/>
            <person name="Iacono M."/>
            <person name="Ikeo K."/>
            <person name="Iwama A."/>
            <person name="Ishikawa T."/>
            <person name="Jakt M."/>
            <person name="Kanapin A."/>
            <person name="Katoh M."/>
            <person name="Kawasawa Y."/>
            <person name="Kelso J."/>
            <person name="Kitamura H."/>
            <person name="Kitano H."/>
            <person name="Kollias G."/>
            <person name="Krishnan S.P."/>
            <person name="Kruger A."/>
            <person name="Kummerfeld S.K."/>
            <person name="Kurochkin I.V."/>
            <person name="Lareau L.F."/>
            <person name="Lazarevic D."/>
            <person name="Lipovich L."/>
            <person name="Liu J."/>
            <person name="Liuni S."/>
            <person name="McWilliam S."/>
            <person name="Madan Babu M."/>
            <person name="Madera M."/>
            <person name="Marchionni L."/>
            <person name="Matsuda H."/>
            <person name="Matsuzawa S."/>
            <person name="Miki H."/>
            <person name="Mignone F."/>
            <person name="Miyake S."/>
            <person name="Morris K."/>
            <person name="Mottagui-Tabar S."/>
            <person name="Mulder N."/>
            <person name="Nakano N."/>
            <person name="Nakauchi H."/>
            <person name="Ng P."/>
            <person name="Nilsson R."/>
            <person name="Nishiguchi S."/>
            <person name="Nishikawa S."/>
            <person name="Nori F."/>
            <person name="Ohara O."/>
            <person name="Okazaki Y."/>
            <person name="Orlando V."/>
            <person name="Pang K.C."/>
            <person name="Pavan W.J."/>
            <person name="Pavesi G."/>
            <person name="Pesole G."/>
            <person name="Petrovsky N."/>
            <person name="Piazza S."/>
            <person name="Reed J."/>
            <person name="Reid J.F."/>
            <person name="Ring B.Z."/>
            <person name="Ringwald M."/>
            <person name="Rost B."/>
            <person name="Ruan Y."/>
            <person name="Salzberg S.L."/>
            <person name="Sandelin A."/>
            <person name="Schneider C."/>
            <person name="Schoenbach C."/>
            <person name="Sekiguchi K."/>
            <person name="Semple C.A."/>
            <person name="Seno S."/>
            <person name="Sessa L."/>
            <person name="Sheng Y."/>
            <person name="Shibata Y."/>
            <person name="Shimada H."/>
            <person name="Shimada K."/>
            <person name="Silva D."/>
            <person name="Sinclair B."/>
            <person name="Sperling S."/>
            <person name="Stupka E."/>
            <person name="Sugiura K."/>
            <person name="Sultana R."/>
            <person name="Takenaka Y."/>
            <person name="Taki K."/>
            <person name="Tammoja K."/>
            <person name="Tan S.L."/>
            <person name="Tang S."/>
            <person name="Taylor M.S."/>
            <person name="Tegner J."/>
            <person name="Teichmann S.A."/>
            <person name="Ueda H.R."/>
            <person name="van Nimwegen E."/>
            <person name="Verardo R."/>
            <person name="Wei C.L."/>
            <person name="Yagi K."/>
            <person name="Yamanishi H."/>
            <person name="Zabarovsky E."/>
            <person name="Zhu S."/>
            <person name="Zimmer A."/>
            <person name="Hide W."/>
            <person name="Bult C."/>
            <person name="Grimmond S.M."/>
            <person name="Teasdale R.D."/>
            <person name="Liu E.T."/>
            <person name="Brusic V."/>
            <person name="Quackenbush J."/>
            <person name="Wahlestedt C."/>
            <person name="Mattick J.S."/>
            <person name="Hume D.A."/>
            <person name="Kai C."/>
            <person name="Sasaki D."/>
            <person name="Tomaru Y."/>
            <person name="Fukuda S."/>
            <person name="Kanamori-Katayama M."/>
            <person name="Suzuki M."/>
            <person name="Aoki J."/>
            <person name="Arakawa T."/>
            <person name="Iida J."/>
            <person name="Imamura K."/>
            <person name="Itoh M."/>
            <person name="Kato T."/>
            <person name="Kawaji H."/>
            <person name="Kawagashira N."/>
            <person name="Kawashima T."/>
            <person name="Kojima M."/>
            <person name="Kondo S."/>
            <person name="Konno H."/>
            <person name="Nakano K."/>
            <person name="Ninomiya N."/>
            <person name="Nishio T."/>
            <person name="Okada M."/>
            <person name="Plessy C."/>
            <person name="Shibata K."/>
            <person name="Shiraki T."/>
            <person name="Suzuki S."/>
            <person name="Tagami M."/>
            <person name="Waki K."/>
            <person name="Watahiki A."/>
            <person name="Okamura-Oho Y."/>
            <person name="Suzuki H."/>
            <person name="Kawai J."/>
            <person name="Hayashizaki Y."/>
        </authorList>
    </citation>
    <scope>NUCLEOTIDE SEQUENCE [LARGE SCALE MRNA] OF 295-1511 (ISOFORM 1)</scope>
    <source>
        <strain>C57BL/6J</strain>
        <tissue>Urinary bladder</tissue>
    </source>
</reference>
<reference key="4">
    <citation type="journal article" date="2004" name="Genome Res.">
        <title>The status, quality, and expansion of the NIH full-length cDNA project: the Mammalian Gene Collection (MGC).</title>
        <authorList>
            <consortium name="The MGC Project Team"/>
        </authorList>
    </citation>
    <scope>NUCLEOTIDE SEQUENCE [LARGE SCALE MRNA] OF 891-1511 (ISOFORMS 1 AND 2)</scope>
    <source>
        <strain>FVB/N</strain>
        <tissue>Mammary tumor</tissue>
    </source>
</reference>
<reference key="5">
    <citation type="journal article" date="2007" name="Biochem. Biophys. Res. Commun.">
        <title>CDK13/CDC2L5 interacts with L-type cyclins and regulates alternative splicing.</title>
        <authorList>
            <person name="Chen H.H."/>
            <person name="Wong Y.H."/>
            <person name="Geneviere A.M."/>
            <person name="Fann M.J."/>
        </authorList>
    </citation>
    <scope>FUNCTION</scope>
    <scope>INTERACTION WITH CCNL1 AND CCNL2</scope>
</reference>
<reference key="6">
    <citation type="journal article" date="2007" name="Proc. Natl. Acad. Sci. U.S.A.">
        <title>Large-scale phosphorylation analysis of mouse liver.</title>
        <authorList>
            <person name="Villen J."/>
            <person name="Beausoleil S.A."/>
            <person name="Gerber S.A."/>
            <person name="Gygi S.P."/>
        </authorList>
    </citation>
    <scope>PHOSPHORYLATION [LARGE SCALE ANALYSIS] AT SER-438</scope>
    <scope>IDENTIFICATION BY MASS SPECTROMETRY [LARGE SCALE ANALYSIS]</scope>
    <source>
        <tissue>Liver</tissue>
    </source>
</reference>
<reference key="7">
    <citation type="journal article" date="2009" name="Mol. Cell. Proteomics">
        <title>Large scale localization of protein phosphorylation by use of electron capture dissociation mass spectrometry.</title>
        <authorList>
            <person name="Sweet S.M."/>
            <person name="Bailey C.M."/>
            <person name="Cunningham D.L."/>
            <person name="Heath J.K."/>
            <person name="Cooper H.J."/>
        </authorList>
    </citation>
    <scope>IDENTIFICATION BY MASS SPECTROMETRY [LARGE SCALE ANALYSIS]</scope>
    <source>
        <tissue>Embryonic fibroblast</tissue>
    </source>
</reference>
<reference key="8">
    <citation type="journal article" date="2010" name="Cell">
        <title>A tissue-specific atlas of mouse protein phosphorylation and expression.</title>
        <authorList>
            <person name="Huttlin E.L."/>
            <person name="Jedrychowski M.P."/>
            <person name="Elias J.E."/>
            <person name="Goswami T."/>
            <person name="Rad R."/>
            <person name="Beausoleil S.A."/>
            <person name="Villen J."/>
            <person name="Haas W."/>
            <person name="Sowa M.E."/>
            <person name="Gygi S.P."/>
        </authorList>
    </citation>
    <scope>PHOSPHORYLATION [LARGE SCALE ANALYSIS] AT SER-341; SER-343; SER-384; SER-398; SER-438; SER-440; SER-526 AND THR-1058</scope>
    <scope>IDENTIFICATION BY MASS SPECTROMETRY [LARGE SCALE ANALYSIS]</scope>
    <source>
        <tissue>Brain</tissue>
        <tissue>Brown adipose tissue</tissue>
        <tissue>Heart</tissue>
        <tissue>Kidney</tissue>
        <tissue>Liver</tissue>
        <tissue>Lung</tissue>
        <tissue>Pancreas</tissue>
        <tissue>Spleen</tissue>
        <tissue>Testis</tissue>
    </source>
</reference>
<reference key="9">
    <citation type="journal article" date="2011" name="Genes Dev.">
        <title>The Cyclin K/Cdk12 complex maintains genomic stability via regulation of expression of DNA damage response genes.</title>
        <authorList>
            <person name="Blazek D."/>
            <person name="Kohoutek J."/>
            <person name="Bartholomeeusen K."/>
            <person name="Johansen E."/>
            <person name="Hulinkova P."/>
            <person name="Luo Z."/>
            <person name="Cimermancic P."/>
            <person name="Ule J."/>
            <person name="Peterlin B.M."/>
        </authorList>
    </citation>
    <scope>INTERACTION WITH CCNK</scope>
</reference>
<feature type="chain" id="PRO_0000085712" description="Cyclin-dependent kinase 13">
    <location>
        <begin position="1"/>
        <end position="1511"/>
    </location>
</feature>
<feature type="domain" description="Protein kinase" evidence="3">
    <location>
        <begin position="705"/>
        <end position="998"/>
    </location>
</feature>
<feature type="region of interest" description="Disordered" evidence="5">
    <location>
        <begin position="1"/>
        <end position="20"/>
    </location>
</feature>
<feature type="region of interest" description="Disordered" evidence="5">
    <location>
        <begin position="30"/>
        <end position="59"/>
    </location>
</feature>
<feature type="region of interest" description="Disordered" evidence="5">
    <location>
        <begin position="74"/>
        <end position="599"/>
    </location>
</feature>
<feature type="region of interest" description="Disordered" evidence="5">
    <location>
        <begin position="653"/>
        <end position="678"/>
    </location>
</feature>
<feature type="region of interest" description="Disordered" evidence="5">
    <location>
        <begin position="1048"/>
        <end position="1074"/>
    </location>
</feature>
<feature type="region of interest" description="Disordered" evidence="5">
    <location>
        <begin position="1138"/>
        <end position="1168"/>
    </location>
</feature>
<feature type="region of interest" description="Disordered" evidence="5">
    <location>
        <begin position="1197"/>
        <end position="1272"/>
    </location>
</feature>
<feature type="region of interest" description="Disordered" evidence="5">
    <location>
        <begin position="1465"/>
        <end position="1511"/>
    </location>
</feature>
<feature type="compositionally biased region" description="Pro residues" evidence="5">
    <location>
        <begin position="49"/>
        <end position="58"/>
    </location>
</feature>
<feature type="compositionally biased region" description="Basic residues" evidence="5">
    <location>
        <begin position="92"/>
        <end position="109"/>
    </location>
</feature>
<feature type="compositionally biased region" description="Gly residues" evidence="5">
    <location>
        <begin position="129"/>
        <end position="140"/>
    </location>
</feature>
<feature type="compositionally biased region" description="Low complexity" evidence="5">
    <location>
        <begin position="160"/>
        <end position="171"/>
    </location>
</feature>
<feature type="compositionally biased region" description="Basic and acidic residues" evidence="5">
    <location>
        <begin position="189"/>
        <end position="198"/>
    </location>
</feature>
<feature type="compositionally biased region" description="Basic residues" evidence="5">
    <location>
        <begin position="210"/>
        <end position="220"/>
    </location>
</feature>
<feature type="compositionally biased region" description="Low complexity" evidence="5">
    <location>
        <begin position="246"/>
        <end position="269"/>
    </location>
</feature>
<feature type="compositionally biased region" description="Basic and acidic residues" evidence="5">
    <location>
        <begin position="295"/>
        <end position="309"/>
    </location>
</feature>
<feature type="compositionally biased region" description="Low complexity" evidence="5">
    <location>
        <begin position="384"/>
        <end position="402"/>
    </location>
</feature>
<feature type="compositionally biased region" description="Basic residues" evidence="5">
    <location>
        <begin position="419"/>
        <end position="436"/>
    </location>
</feature>
<feature type="compositionally biased region" description="Low complexity" evidence="5">
    <location>
        <begin position="463"/>
        <end position="490"/>
    </location>
</feature>
<feature type="compositionally biased region" description="Polar residues" evidence="5">
    <location>
        <begin position="491"/>
        <end position="511"/>
    </location>
</feature>
<feature type="compositionally biased region" description="Basic and acidic residues" evidence="5">
    <location>
        <begin position="512"/>
        <end position="523"/>
    </location>
</feature>
<feature type="compositionally biased region" description="Basic and acidic residues" evidence="5">
    <location>
        <begin position="564"/>
        <end position="585"/>
    </location>
</feature>
<feature type="compositionally biased region" description="Basic and acidic residues" evidence="5">
    <location>
        <begin position="660"/>
        <end position="670"/>
    </location>
</feature>
<feature type="compositionally biased region" description="Polar residues" evidence="5">
    <location>
        <begin position="1144"/>
        <end position="1166"/>
    </location>
</feature>
<feature type="compositionally biased region" description="Basic and acidic residues" evidence="5">
    <location>
        <begin position="1197"/>
        <end position="1209"/>
    </location>
</feature>
<feature type="compositionally biased region" description="Basic and acidic residues" evidence="5">
    <location>
        <begin position="1233"/>
        <end position="1252"/>
    </location>
</feature>
<feature type="compositionally biased region" description="Pro residues" evidence="5">
    <location>
        <begin position="1253"/>
        <end position="1269"/>
    </location>
</feature>
<feature type="active site" description="Proton acceptor" evidence="3 4">
    <location>
        <position position="837"/>
    </location>
</feature>
<feature type="binding site" evidence="3">
    <location>
        <begin position="711"/>
        <end position="719"/>
    </location>
    <ligand>
        <name>ATP</name>
        <dbReference type="ChEBI" id="CHEBI:30616"/>
    </ligand>
</feature>
<feature type="binding site" evidence="3">
    <location>
        <position position="734"/>
    </location>
    <ligand>
        <name>ATP</name>
        <dbReference type="ChEBI" id="CHEBI:30616"/>
    </ligand>
</feature>
<feature type="modified residue" description="Phosphoserine" evidence="2">
    <location>
        <position position="316"/>
    </location>
</feature>
<feature type="modified residue" description="Phosphoserine" evidence="2">
    <location>
        <position position="318"/>
    </location>
</feature>
<feature type="modified residue" description="Phosphoserine" evidence="2">
    <location>
        <position position="326"/>
    </location>
</feature>
<feature type="modified residue" description="Phosphoserine" evidence="12">
    <location>
        <position position="341"/>
    </location>
</feature>
<feature type="modified residue" description="Phosphoserine" evidence="12">
    <location>
        <position position="343"/>
    </location>
</feature>
<feature type="modified residue" description="Phosphoserine" evidence="2">
    <location>
        <position position="359"/>
    </location>
</feature>
<feature type="modified residue" description="Phosphoserine" evidence="2">
    <location>
        <position position="361"/>
    </location>
</feature>
<feature type="modified residue" description="Phosphoserine" evidence="12">
    <location>
        <position position="384"/>
    </location>
</feature>
<feature type="modified residue" description="Phosphoserine" evidence="2">
    <location>
        <position position="396"/>
    </location>
</feature>
<feature type="modified residue" description="Phosphoserine" evidence="12">
    <location>
        <position position="398"/>
    </location>
</feature>
<feature type="modified residue" description="Phosphoserine" evidence="2">
    <location>
        <position position="401"/>
    </location>
</feature>
<feature type="modified residue" description="Phosphoserine" evidence="11 12">
    <location>
        <position position="438"/>
    </location>
</feature>
<feature type="modified residue" description="Phosphoserine" evidence="12">
    <location>
        <position position="440"/>
    </location>
</feature>
<feature type="modified residue" description="Phosphoserine" evidence="12">
    <location>
        <position position="526"/>
    </location>
</feature>
<feature type="modified residue" description="N6-acetyllysine" evidence="2">
    <location>
        <position position="557"/>
    </location>
</feature>
<feature type="modified residue" description="Phosphothreonine" evidence="2">
    <location>
        <position position="588"/>
    </location>
</feature>
<feature type="modified residue" description="Phosphothreonine" evidence="2">
    <location>
        <position position="871"/>
    </location>
</feature>
<feature type="modified residue" description="Phosphoserine" evidence="2">
    <location>
        <position position="1048"/>
    </location>
</feature>
<feature type="modified residue" description="Phosphothreonine" evidence="12">
    <location>
        <position position="1058"/>
    </location>
</feature>
<feature type="modified residue" description="Phosphothreonine" evidence="2">
    <location>
        <position position="1245"/>
    </location>
</feature>
<feature type="cross-link" description="Glycyl lysine isopeptide (Lys-Gly) (interchain with G-Cter in SUMO2)" evidence="2">
    <location>
        <position position="520"/>
    </location>
</feature>
<feature type="cross-link" description="Glycyl lysine isopeptide (Lys-Gly) (interchain with G-Cter in SUMO2)" evidence="2">
    <location>
        <position position="548"/>
    </location>
</feature>
<feature type="splice variant" id="VSP_013580" description="In isoform 2." evidence="8 9">
    <location>
        <begin position="1079"/>
        <end position="1138"/>
    </location>
</feature>
<feature type="sequence conflict" description="In Ref. 1; BAD32543." evidence="10" ref="1">
    <original>A</original>
    <variation>V</variation>
    <location>
        <position position="73"/>
    </location>
</feature>
<feature type="sequence conflict" description="In Ref. 1; BAD32543." evidence="10" ref="1">
    <original>Q</original>
    <variation>R</variation>
    <location>
        <position position="103"/>
    </location>
</feature>
<feature type="sequence conflict" description="In Ref. 3; BAC29077." evidence="10" ref="3">
    <original>E</original>
    <variation>K</variation>
    <location>
        <position position="637"/>
    </location>
</feature>
<feature type="sequence conflict" description="In Ref. 1; BAD32543." evidence="10" ref="1">
    <original>P</original>
    <variation>L</variation>
    <location>
        <position position="1009"/>
    </location>
</feature>
<feature type="sequence conflict" description="In Ref. 4; AAH32179." evidence="10" ref="4">
    <original>E</original>
    <variation>K</variation>
    <location>
        <position position="1206"/>
    </location>
</feature>
<feature type="sequence conflict" description="In Ref. 4; AAH51093." evidence="10" ref="4">
    <original>A</original>
    <variation>P</variation>
    <location>
        <position position="1400"/>
    </location>
</feature>
<feature type="sequence conflict" description="In Ref. 3; BAC29077." evidence="10" ref="3">
    <original>N</original>
    <variation>D</variation>
    <location>
        <position position="1464"/>
    </location>
</feature>
<dbReference type="EC" id="2.7.11.22"/>
<dbReference type="EC" id="2.7.11.23"/>
<dbReference type="EMBL" id="AK173265">
    <property type="protein sequence ID" value="BAD32543.1"/>
    <property type="status" value="ALT_INIT"/>
    <property type="molecule type" value="mRNA"/>
</dbReference>
<dbReference type="EMBL" id="AC154219">
    <property type="status" value="NOT_ANNOTATED_CDS"/>
    <property type="molecule type" value="Genomic_DNA"/>
</dbReference>
<dbReference type="EMBL" id="AC154828">
    <property type="status" value="NOT_ANNOTATED_CDS"/>
    <property type="molecule type" value="Genomic_DNA"/>
</dbReference>
<dbReference type="EMBL" id="AK035493">
    <property type="protein sequence ID" value="BAC29077.1"/>
    <property type="status" value="ALT_SEQ"/>
    <property type="molecule type" value="mRNA"/>
</dbReference>
<dbReference type="EMBL" id="BC032179">
    <property type="protein sequence ID" value="AAH32179.1"/>
    <property type="status" value="ALT_INIT"/>
    <property type="molecule type" value="mRNA"/>
</dbReference>
<dbReference type="EMBL" id="BC051093">
    <property type="protein sequence ID" value="AAH51093.1"/>
    <property type="molecule type" value="mRNA"/>
</dbReference>
<dbReference type="CCDS" id="CCDS36604.1">
    <molecule id="Q69ZA1-1"/>
</dbReference>
<dbReference type="CCDS" id="CCDS88417.1">
    <molecule id="Q69ZA1-2"/>
</dbReference>
<dbReference type="RefSeq" id="NP_001074527.1">
    <molecule id="Q69ZA1-1"/>
    <property type="nucleotide sequence ID" value="NM_001081058.2"/>
</dbReference>
<dbReference type="RefSeq" id="NP_081394.1">
    <molecule id="Q69ZA1-2"/>
    <property type="nucleotide sequence ID" value="NM_027118.1"/>
</dbReference>
<dbReference type="SMR" id="Q69ZA1"/>
<dbReference type="BioGRID" id="213532">
    <property type="interactions" value="5"/>
</dbReference>
<dbReference type="ComplexPortal" id="CPX-366">
    <property type="entry name" value="Cyclin K-Cdk13 complex"/>
</dbReference>
<dbReference type="FunCoup" id="Q69ZA1">
    <property type="interactions" value="4990"/>
</dbReference>
<dbReference type="IntAct" id="Q69ZA1">
    <property type="interactions" value="1"/>
</dbReference>
<dbReference type="STRING" id="10090.ENSMUSP00000036013"/>
<dbReference type="GlyGen" id="Q69ZA1">
    <property type="glycosylation" value="4 sites, 1 O-linked glycan (4 sites)"/>
</dbReference>
<dbReference type="iPTMnet" id="Q69ZA1"/>
<dbReference type="PhosphoSitePlus" id="Q69ZA1"/>
<dbReference type="jPOST" id="Q69ZA1"/>
<dbReference type="PaxDb" id="10090-ENSMUSP00000036013"/>
<dbReference type="PeptideAtlas" id="Q69ZA1"/>
<dbReference type="ProteomicsDB" id="280038">
    <molecule id="Q69ZA1-1"/>
</dbReference>
<dbReference type="ProteomicsDB" id="280039">
    <molecule id="Q69ZA1-2"/>
</dbReference>
<dbReference type="Pumba" id="Q69ZA1"/>
<dbReference type="Antibodypedia" id="26726">
    <property type="antibodies" value="205 antibodies from 28 providers"/>
</dbReference>
<dbReference type="DNASU" id="69562"/>
<dbReference type="Ensembl" id="ENSMUST00000042365.9">
    <molecule id="Q69ZA1-1"/>
    <property type="protein sequence ID" value="ENSMUSP00000036013.8"/>
    <property type="gene ID" value="ENSMUSG00000041297.9"/>
</dbReference>
<dbReference type="Ensembl" id="ENSMUST00000223490.2">
    <molecule id="Q69ZA1-2"/>
    <property type="protein sequence ID" value="ENSMUSP00000152820.2"/>
    <property type="gene ID" value="ENSMUSG00000041297.9"/>
</dbReference>
<dbReference type="GeneID" id="69562"/>
<dbReference type="KEGG" id="mmu:69562"/>
<dbReference type="UCSC" id="uc007poc.2">
    <molecule id="Q69ZA1-1"/>
    <property type="organism name" value="mouse"/>
</dbReference>
<dbReference type="UCSC" id="uc007pod.2">
    <molecule id="Q69ZA1-2"/>
    <property type="organism name" value="mouse"/>
</dbReference>
<dbReference type="AGR" id="MGI:1916812"/>
<dbReference type="CTD" id="8621"/>
<dbReference type="MGI" id="MGI:1916812">
    <property type="gene designation" value="Cdk13"/>
</dbReference>
<dbReference type="VEuPathDB" id="HostDB:ENSMUSG00000041297"/>
<dbReference type="eggNOG" id="KOG0600">
    <property type="taxonomic scope" value="Eukaryota"/>
</dbReference>
<dbReference type="GeneTree" id="ENSGT00940000157852"/>
<dbReference type="HOGENOM" id="CLU_004166_3_0_1"/>
<dbReference type="InParanoid" id="Q69ZA1"/>
<dbReference type="OMA" id="PKAYREE"/>
<dbReference type="OrthoDB" id="28397at2759"/>
<dbReference type="PhylomeDB" id="Q69ZA1"/>
<dbReference type="TreeFam" id="TF101060"/>
<dbReference type="Reactome" id="R-MMU-6796648">
    <property type="pathway name" value="TP53 Regulates Transcription of DNA Repair Genes"/>
</dbReference>
<dbReference type="Reactome" id="R-MMU-6798695">
    <property type="pathway name" value="Neutrophil degranulation"/>
</dbReference>
<dbReference type="BioGRID-ORCS" id="69562">
    <property type="hits" value="17 hits in 83 CRISPR screens"/>
</dbReference>
<dbReference type="ChiTaRS" id="Cdk13">
    <property type="organism name" value="mouse"/>
</dbReference>
<dbReference type="PRO" id="PR:Q69ZA1"/>
<dbReference type="Proteomes" id="UP000000589">
    <property type="component" value="Chromosome 13"/>
</dbReference>
<dbReference type="RNAct" id="Q69ZA1">
    <property type="molecule type" value="protein"/>
</dbReference>
<dbReference type="Bgee" id="ENSMUSG00000041297">
    <property type="expression patterns" value="Expressed in undifferentiated genital tubercle and 228 other cell types or tissues"/>
</dbReference>
<dbReference type="ExpressionAtlas" id="Q69ZA1">
    <property type="expression patterns" value="baseline and differential"/>
</dbReference>
<dbReference type="GO" id="GO:0002945">
    <property type="term" value="C:cyclin K-CDK13 complex"/>
    <property type="evidence" value="ECO:0000266"/>
    <property type="project" value="MGI"/>
</dbReference>
<dbReference type="GO" id="GO:0005829">
    <property type="term" value="C:cytosol"/>
    <property type="evidence" value="ECO:0007669"/>
    <property type="project" value="Ensembl"/>
</dbReference>
<dbReference type="GO" id="GO:0005794">
    <property type="term" value="C:Golgi apparatus"/>
    <property type="evidence" value="ECO:0007669"/>
    <property type="project" value="Ensembl"/>
</dbReference>
<dbReference type="GO" id="GO:0019908">
    <property type="term" value="C:nuclear cyclin-dependent protein kinase holoenzyme complex"/>
    <property type="evidence" value="ECO:0000314"/>
    <property type="project" value="UniProtKB"/>
</dbReference>
<dbReference type="GO" id="GO:0016607">
    <property type="term" value="C:nuclear speck"/>
    <property type="evidence" value="ECO:0000250"/>
    <property type="project" value="UniProtKB"/>
</dbReference>
<dbReference type="GO" id="GO:0005524">
    <property type="term" value="F:ATP binding"/>
    <property type="evidence" value="ECO:0007669"/>
    <property type="project" value="UniProtKB-KW"/>
</dbReference>
<dbReference type="GO" id="GO:0030332">
    <property type="term" value="F:cyclin binding"/>
    <property type="evidence" value="ECO:0000353"/>
    <property type="project" value="UniProtKB"/>
</dbReference>
<dbReference type="GO" id="GO:0004693">
    <property type="term" value="F:cyclin-dependent protein serine/threonine kinase activity"/>
    <property type="evidence" value="ECO:0007669"/>
    <property type="project" value="UniProtKB-EC"/>
</dbReference>
<dbReference type="GO" id="GO:0019901">
    <property type="term" value="F:protein kinase binding"/>
    <property type="evidence" value="ECO:0000314"/>
    <property type="project" value="MGI"/>
</dbReference>
<dbReference type="GO" id="GO:0106310">
    <property type="term" value="F:protein serine kinase activity"/>
    <property type="evidence" value="ECO:0007669"/>
    <property type="project" value="RHEA"/>
</dbReference>
<dbReference type="GO" id="GO:0008353">
    <property type="term" value="F:RNA polymerase II CTD heptapeptide repeat kinase activity"/>
    <property type="evidence" value="ECO:0000250"/>
    <property type="project" value="UniProtKB"/>
</dbReference>
<dbReference type="GO" id="GO:0000380">
    <property type="term" value="P:alternative mRNA splicing, via spliceosome"/>
    <property type="evidence" value="ECO:0000314"/>
    <property type="project" value="UniProtKB"/>
</dbReference>
<dbReference type="GO" id="GO:0030097">
    <property type="term" value="P:hemopoiesis"/>
    <property type="evidence" value="ECO:0000250"/>
    <property type="project" value="UniProtKB"/>
</dbReference>
<dbReference type="GO" id="GO:2000737">
    <property type="term" value="P:negative regulation of stem cell differentiation"/>
    <property type="evidence" value="ECO:0000315"/>
    <property type="project" value="MGI"/>
</dbReference>
<dbReference type="GO" id="GO:0045944">
    <property type="term" value="P:positive regulation of transcription by RNA polymerase II"/>
    <property type="evidence" value="ECO:0000250"/>
    <property type="project" value="UniProtKB"/>
</dbReference>
<dbReference type="GO" id="GO:0032968">
    <property type="term" value="P:positive regulation of transcription elongation by RNA polymerase II"/>
    <property type="evidence" value="ECO:0000266"/>
    <property type="project" value="ComplexPortal"/>
</dbReference>
<dbReference type="GO" id="GO:0009966">
    <property type="term" value="P:regulation of signal transduction"/>
    <property type="evidence" value="ECO:0000266"/>
    <property type="project" value="ComplexPortal"/>
</dbReference>
<dbReference type="CDD" id="cd07864">
    <property type="entry name" value="STKc_CDK12"/>
    <property type="match status" value="1"/>
</dbReference>
<dbReference type="FunFam" id="1.10.510.10:FF:000102">
    <property type="entry name" value="cyclin-dependent kinase 12 isoform X1"/>
    <property type="match status" value="1"/>
</dbReference>
<dbReference type="FunFam" id="3.30.200.20:FF:000074">
    <property type="entry name" value="cyclin-dependent kinase 12 isoform X2"/>
    <property type="match status" value="1"/>
</dbReference>
<dbReference type="Gene3D" id="3.30.200.20">
    <property type="entry name" value="Phosphorylase Kinase, domain 1"/>
    <property type="match status" value="1"/>
</dbReference>
<dbReference type="Gene3D" id="1.10.510.10">
    <property type="entry name" value="Transferase(Phosphotransferase) domain 1"/>
    <property type="match status" value="1"/>
</dbReference>
<dbReference type="InterPro" id="IPR050108">
    <property type="entry name" value="CDK"/>
</dbReference>
<dbReference type="InterPro" id="IPR011009">
    <property type="entry name" value="Kinase-like_dom_sf"/>
</dbReference>
<dbReference type="InterPro" id="IPR000719">
    <property type="entry name" value="Prot_kinase_dom"/>
</dbReference>
<dbReference type="InterPro" id="IPR017441">
    <property type="entry name" value="Protein_kinase_ATP_BS"/>
</dbReference>
<dbReference type="InterPro" id="IPR008271">
    <property type="entry name" value="Ser/Thr_kinase_AS"/>
</dbReference>
<dbReference type="PANTHER" id="PTHR24056">
    <property type="entry name" value="CELL DIVISION PROTEIN KINASE"/>
    <property type="match status" value="1"/>
</dbReference>
<dbReference type="PANTHER" id="PTHR24056:SF459">
    <property type="entry name" value="CYCLIN-DEPENDENT KINASE 13"/>
    <property type="match status" value="1"/>
</dbReference>
<dbReference type="Pfam" id="PF00069">
    <property type="entry name" value="Pkinase"/>
    <property type="match status" value="1"/>
</dbReference>
<dbReference type="SMART" id="SM00220">
    <property type="entry name" value="S_TKc"/>
    <property type="match status" value="1"/>
</dbReference>
<dbReference type="SUPFAM" id="SSF56112">
    <property type="entry name" value="Protein kinase-like (PK-like)"/>
    <property type="match status" value="1"/>
</dbReference>
<dbReference type="PROSITE" id="PS00107">
    <property type="entry name" value="PROTEIN_KINASE_ATP"/>
    <property type="match status" value="1"/>
</dbReference>
<dbReference type="PROSITE" id="PS50011">
    <property type="entry name" value="PROTEIN_KINASE_DOM"/>
    <property type="match status" value="1"/>
</dbReference>
<dbReference type="PROSITE" id="PS00108">
    <property type="entry name" value="PROTEIN_KINASE_ST"/>
    <property type="match status" value="1"/>
</dbReference>
<accession>Q69ZA1</accession>
<accession>E9QKZ6</accession>
<accession>Q80V11</accession>
<accession>Q8BZG1</accession>
<accession>Q8K0A4</accession>
<keyword id="KW-0007">Acetylation</keyword>
<keyword id="KW-0025">Alternative splicing</keyword>
<keyword id="KW-0067">ATP-binding</keyword>
<keyword id="KW-1017">Isopeptide bond</keyword>
<keyword id="KW-0418">Kinase</keyword>
<keyword id="KW-0507">mRNA processing</keyword>
<keyword id="KW-0508">mRNA splicing</keyword>
<keyword id="KW-0547">Nucleotide-binding</keyword>
<keyword id="KW-0539">Nucleus</keyword>
<keyword id="KW-0597">Phosphoprotein</keyword>
<keyword id="KW-1185">Reference proteome</keyword>
<keyword id="KW-0723">Serine/threonine-protein kinase</keyword>
<keyword id="KW-0808">Transferase</keyword>
<keyword id="KW-0832">Ubl conjugation</keyword>
<protein>
    <recommendedName>
        <fullName>Cyclin-dependent kinase 13</fullName>
        <ecNumber>2.7.11.22</ecNumber>
        <ecNumber>2.7.11.23</ecNumber>
    </recommendedName>
    <alternativeName>
        <fullName>CDC2-related protein kinase 5</fullName>
    </alternativeName>
    <alternativeName>
        <fullName>Cell division cycle 2-like protein kinase 5</fullName>
    </alternativeName>
    <alternativeName>
        <fullName>Cell division protein kinase 13</fullName>
    </alternativeName>
</protein>
<gene>
    <name type="primary">Cdk13</name>
    <name type="synonym">Cdc2l5</name>
    <name type="synonym">Kiaa1791</name>
</gene>
<name>CDK13_MOUSE</name>
<sequence length="1511" mass="164553">MPSSSDTALGGGGGLSWAEKKLEERRKRRRFLSPQQPPLLLPLLQPQLLQPPPPPPPLLFLAAPGAAAAAAAAAAASSSCFSPGPPLEVKRLARGKRRPGGRQKRRRGPRAGQEAEKRRVFSLPQPQQDGGGGASSGGGVTPLVEYEDVSSQSEQGLLLGGASAATAATAAGGTGGNGGSPASSSGTQRRAEGSERRPRRDRRSSSGRSKERHREHRRRDGTRSGSEASKARSRHGHSGEERAEAAKSGSSSSSGGRRKSASATSSSSSSRKDRDLKAHRSRTKSSKEPPSAYKEPPKAYREDKSEPKAYRRRQRSLSPLGGRDESPVSHRASQSLRSRKSPSPAGGGSSPYSRRLPRSPSPYSRRRSPSYSRHSSYERGGDVSPSPYSSSSWRRSRSPYSPVLRRSAKSRSRSPYSSRHSRSRSRHRLSRSRSRHSSISPSTLTLKSSLAAELNKNKKARAAEAARAAEAAKAAEAAKAAEAAAKAAKASNASTPTKGNTETGASVSQTNHVKEVKKLKTEHAPSPSSGGTVKSDKAKTKPPLQVTKVDNNLTVEKATKKTVVGKESKPAATKEEPVSTKEKSKPLTPSTGAKEKEQHVALVTSTLPPLPLPPMLPEDKDADSLRGNISVKAVKKEVEKKLRCLLADLPLPPELPGGDDLSKSPEEKKTAAQLHSKRRPKICGPRYGEIKEKDIDWGKRCVDKFDIIGIIGEGTYGQVYKARDKDTGEMVALKKVRLDNEKEGFPITAIREIKILRQLTHQSIINMKEIVTDKEDALDFKKDKGAFYLVFEYMDHDLMGLLESGLVHFNENHIKSFMRQLMEGLDYCHKKNFLHRDIKCSNILLNNRGQIKLADFGLARLYSSEESRPYTNKVITLWYRPPELLLGEERYTPAIDVWSCGCILGELFTKKPIFQANQELAQLELISRICGSPCPAVWPDVIKLPYFNTMKPKKQYRRKLREEFVFIPAAALDLFDYMLALDPSKRCTAEQALQCEFLRDVEPSKMPPPDLPLWQDCHELWSKKRRRQKQMGMTDDLSTIKAPRKDLSLGLDDSRTNTPQGVLPPAQLKSQSNSNVAPVITGPGQPLNHSELAILLNLLQSKSSVNMADFVQVLNIKVNSETQQQLNKINLPAGILATGEKQTDPSTPQQESSKSLGGVQPSQTIQPKVETDAAQAAVQSAFAVLLTQLIKAQQSKQKDAMLEERENGSGHEAPLQLRPPLEPSTPGSGQDDLIQHQDRRILELTPEPDRPRILPPDQRPPEPPEPPPVTEEDLDYRTENQHVPTTSSSLTDPHAGVKAALLQLLAQHQPQDDPKREGGIDYPTGDTYVPSSDYKDNFGSSFSAAPYVSSDGLGSSSAAAPLEARSFIGNSDIQSLDNYSTASSHTGGPPQTSAFTESFASSVAGYGDIYLNAGPMLFSGDKDHRFEYSHGPITVLTNSNDPSTGPESTHPLPAKMHNYNYGGNLQENPGGPSLMHGQTWTSPAQGPGYSQGYRGHISTSAGRGRGRGLPY</sequence>
<comment type="function">
    <text evidence="6">Cyclin-dependent kinase which displays CTD kinase activity and is required for RNA splicing. Has CTD kinase activity by hyperphosphorylating the C-terminal heptapeptide repeat domain (CTD) of the largest RNA polymerase II subunit RPB1, thereby acting as a key regulator of transcription elongation. Required for RNA splicing, probably by phosphorylating SRSF1/SF2. Required during hematopoiesis.</text>
</comment>
<comment type="catalytic activity">
    <reaction>
        <text>[DNA-directed RNA polymerase] + ATP = phospho-[DNA-directed RNA polymerase] + ADP + H(+)</text>
        <dbReference type="Rhea" id="RHEA:10216"/>
        <dbReference type="Rhea" id="RHEA-COMP:11321"/>
        <dbReference type="Rhea" id="RHEA-COMP:11322"/>
        <dbReference type="ChEBI" id="CHEBI:15378"/>
        <dbReference type="ChEBI" id="CHEBI:30616"/>
        <dbReference type="ChEBI" id="CHEBI:43176"/>
        <dbReference type="ChEBI" id="CHEBI:68546"/>
        <dbReference type="ChEBI" id="CHEBI:456216"/>
        <dbReference type="EC" id="2.7.11.23"/>
    </reaction>
</comment>
<comment type="catalytic activity">
    <reaction>
        <text>L-seryl-[protein] + ATP = O-phospho-L-seryl-[protein] + ADP + H(+)</text>
        <dbReference type="Rhea" id="RHEA:17989"/>
        <dbReference type="Rhea" id="RHEA-COMP:9863"/>
        <dbReference type="Rhea" id="RHEA-COMP:11604"/>
        <dbReference type="ChEBI" id="CHEBI:15378"/>
        <dbReference type="ChEBI" id="CHEBI:29999"/>
        <dbReference type="ChEBI" id="CHEBI:30616"/>
        <dbReference type="ChEBI" id="CHEBI:83421"/>
        <dbReference type="ChEBI" id="CHEBI:456216"/>
        <dbReference type="EC" id="2.7.11.22"/>
    </reaction>
</comment>
<comment type="catalytic activity">
    <reaction>
        <text>L-threonyl-[protein] + ATP = O-phospho-L-threonyl-[protein] + ADP + H(+)</text>
        <dbReference type="Rhea" id="RHEA:46608"/>
        <dbReference type="Rhea" id="RHEA-COMP:11060"/>
        <dbReference type="Rhea" id="RHEA-COMP:11605"/>
        <dbReference type="ChEBI" id="CHEBI:15378"/>
        <dbReference type="ChEBI" id="CHEBI:30013"/>
        <dbReference type="ChEBI" id="CHEBI:30616"/>
        <dbReference type="ChEBI" id="CHEBI:61977"/>
        <dbReference type="ChEBI" id="CHEBI:456216"/>
        <dbReference type="EC" id="2.7.11.22"/>
    </reaction>
</comment>
<comment type="subunit">
    <text evidence="1 6 7">Interacts with C1QBP (By similarity). Interacts with CCNK, CCNL1 and CCNL2.</text>
</comment>
<comment type="subcellular location">
    <subcellularLocation>
        <location evidence="1">Nucleus speckle</location>
    </subcellularLocation>
</comment>
<comment type="alternative products">
    <event type="alternative splicing"/>
    <isoform>
        <id>Q69ZA1-1</id>
        <name>1</name>
        <sequence type="displayed"/>
    </isoform>
    <isoform>
        <id>Q69ZA1-2</id>
        <name>2</name>
        <sequence type="described" ref="VSP_013580"/>
    </isoform>
</comment>
<comment type="similarity">
    <text evidence="10">Belongs to the protein kinase superfamily. CMGC Ser/Thr protein kinase family. CDC2/CDKX subfamily.</text>
</comment>
<comment type="sequence caution" evidence="10">
    <conflict type="erroneous initiation">
        <sequence resource="EMBL-CDS" id="AAH32179"/>
    </conflict>
    <text>Extended N-terminus.</text>
</comment>
<comment type="sequence caution" evidence="10">
    <conflict type="erroneous initiation">
        <sequence resource="EMBL-CDS" id="BAC29077"/>
    </conflict>
    <text>Truncated N-terminus.</text>
</comment>
<comment type="sequence caution" evidence="10">
    <conflict type="frameshift">
        <sequence resource="EMBL-CDS" id="BAC29077"/>
    </conflict>
</comment>
<comment type="sequence caution" evidence="10">
    <conflict type="erroneous initiation">
        <sequence resource="EMBL-CDS" id="BAD32543"/>
    </conflict>
    <text>Extended N-terminus.</text>
</comment>
<evidence type="ECO:0000250" key="1"/>
<evidence type="ECO:0000250" key="2">
    <source>
        <dbReference type="UniProtKB" id="Q14004"/>
    </source>
</evidence>
<evidence type="ECO:0000255" key="3">
    <source>
        <dbReference type="PROSITE-ProRule" id="PRU00159"/>
    </source>
</evidence>
<evidence type="ECO:0000255" key="4">
    <source>
        <dbReference type="PROSITE-ProRule" id="PRU10027"/>
    </source>
</evidence>
<evidence type="ECO:0000256" key="5">
    <source>
        <dbReference type="SAM" id="MobiDB-lite"/>
    </source>
</evidence>
<evidence type="ECO:0000269" key="6">
    <source>
    </source>
</evidence>
<evidence type="ECO:0000269" key="7">
    <source>
    </source>
</evidence>
<evidence type="ECO:0000303" key="8">
    <source>
    </source>
</evidence>
<evidence type="ECO:0000303" key="9">
    <source>
    </source>
</evidence>
<evidence type="ECO:0000305" key="10"/>
<evidence type="ECO:0007744" key="11">
    <source>
    </source>
</evidence>
<evidence type="ECO:0007744" key="12">
    <source>
    </source>
</evidence>